<gene>
    <name evidence="1" type="primary">tig</name>
    <name type="ordered locus">STM0447</name>
</gene>
<feature type="chain" id="PRO_0000179421" description="Trigger factor">
    <location>
        <begin position="1"/>
        <end position="432"/>
    </location>
</feature>
<feature type="domain" description="PPIase FKBP-type" evidence="1">
    <location>
        <begin position="161"/>
        <end position="246"/>
    </location>
</feature>
<organism>
    <name type="scientific">Salmonella typhimurium (strain LT2 / SGSC1412 / ATCC 700720)</name>
    <dbReference type="NCBI Taxonomy" id="99287"/>
    <lineage>
        <taxon>Bacteria</taxon>
        <taxon>Pseudomonadati</taxon>
        <taxon>Pseudomonadota</taxon>
        <taxon>Gammaproteobacteria</taxon>
        <taxon>Enterobacterales</taxon>
        <taxon>Enterobacteriaceae</taxon>
        <taxon>Salmonella</taxon>
    </lineage>
</organism>
<reference key="1">
    <citation type="journal article" date="2001" name="Nature">
        <title>Complete genome sequence of Salmonella enterica serovar Typhimurium LT2.</title>
        <authorList>
            <person name="McClelland M."/>
            <person name="Sanderson K.E."/>
            <person name="Spieth J."/>
            <person name="Clifton S.W."/>
            <person name="Latreille P."/>
            <person name="Courtney L."/>
            <person name="Porwollik S."/>
            <person name="Ali J."/>
            <person name="Dante M."/>
            <person name="Du F."/>
            <person name="Hou S."/>
            <person name="Layman D."/>
            <person name="Leonard S."/>
            <person name="Nguyen C."/>
            <person name="Scott K."/>
            <person name="Holmes A."/>
            <person name="Grewal N."/>
            <person name="Mulvaney E."/>
            <person name="Ryan E."/>
            <person name="Sun H."/>
            <person name="Florea L."/>
            <person name="Miller W."/>
            <person name="Stoneking T."/>
            <person name="Nhan M."/>
            <person name="Waterston R."/>
            <person name="Wilson R.K."/>
        </authorList>
    </citation>
    <scope>NUCLEOTIDE SEQUENCE [LARGE SCALE GENOMIC DNA]</scope>
    <source>
        <strain>LT2 / SGSC1412 / ATCC 700720</strain>
    </source>
</reference>
<sequence length="432" mass="48066">MQVSVETTQGLGRRVTITIAADSIETAVKSELVNVAKKVRIDGFRKGKVPMNIVAQRYGASVRQDVLGDLMSRNFVDAIIKEKINPAGAPNYVPGEYKVGEDFTYSVEFEVYPEVELTGLESIEVEKPVVEVTDADVDVMLDTLRKQQATWKEKDGAADAEDRVTIDFTGSVDGEEFEGGKATDFVLAMGQGRMIPGFEDGVKGHKAGEEFTIDVTFPEEYHAENLKGKAAKFVINLKKVEERELPELTEEFIKRFGVEDGSVAGLRAEVRKNMERELKGAVRNRVKSQAIEGLVKANDIDVPSALIDSEIDVLRRQAAQRFGGNEKQALELPRELFEEQAKRRVVVGLLLGEVIRTNELKADEERVKGLIEEMASAYEDPKEVIEFYSKNKELMDNMRNVALEEQAVEAVLAKAKVSEKATSFNELMNQQA</sequence>
<name>TIG_SALTY</name>
<accession>P66932</accession>
<accession>Q8XFC4</accession>
<keyword id="KW-0131">Cell cycle</keyword>
<keyword id="KW-0132">Cell division</keyword>
<keyword id="KW-0143">Chaperone</keyword>
<keyword id="KW-0963">Cytoplasm</keyword>
<keyword id="KW-0413">Isomerase</keyword>
<keyword id="KW-1185">Reference proteome</keyword>
<keyword id="KW-0697">Rotamase</keyword>
<comment type="function">
    <text evidence="1">Involved in protein export. Acts as a chaperone by maintaining the newly synthesized protein in an open conformation. Functions as a peptidyl-prolyl cis-trans isomerase.</text>
</comment>
<comment type="catalytic activity">
    <reaction evidence="1">
        <text>[protein]-peptidylproline (omega=180) = [protein]-peptidylproline (omega=0)</text>
        <dbReference type="Rhea" id="RHEA:16237"/>
        <dbReference type="Rhea" id="RHEA-COMP:10747"/>
        <dbReference type="Rhea" id="RHEA-COMP:10748"/>
        <dbReference type="ChEBI" id="CHEBI:83833"/>
        <dbReference type="ChEBI" id="CHEBI:83834"/>
        <dbReference type="EC" id="5.2.1.8"/>
    </reaction>
</comment>
<comment type="subcellular location">
    <subcellularLocation>
        <location>Cytoplasm</location>
    </subcellularLocation>
    <text evidence="1">About half TF is bound to the ribosome near the polypeptide exit tunnel while the other half is free in the cytoplasm.</text>
</comment>
<comment type="domain">
    <text evidence="1">Consists of 3 domains; the N-terminus binds the ribosome, the middle domain has PPIase activity, while the C-terminus has intrinsic chaperone activity on its own.</text>
</comment>
<comment type="similarity">
    <text evidence="1">Belongs to the FKBP-type PPIase family. Tig subfamily.</text>
</comment>
<evidence type="ECO:0000255" key="1">
    <source>
        <dbReference type="HAMAP-Rule" id="MF_00303"/>
    </source>
</evidence>
<protein>
    <recommendedName>
        <fullName evidence="1">Trigger factor</fullName>
        <shortName evidence="1">TF</shortName>
        <ecNumber evidence="1">5.2.1.8</ecNumber>
    </recommendedName>
    <alternativeName>
        <fullName evidence="1">PPIase</fullName>
    </alternativeName>
</protein>
<dbReference type="EC" id="5.2.1.8" evidence="1"/>
<dbReference type="EMBL" id="AE006468">
    <property type="protein sequence ID" value="AAL19402.1"/>
    <property type="molecule type" value="Genomic_DNA"/>
</dbReference>
<dbReference type="RefSeq" id="NP_459443.1">
    <property type="nucleotide sequence ID" value="NC_003197.2"/>
</dbReference>
<dbReference type="RefSeq" id="WP_001198406.1">
    <property type="nucleotide sequence ID" value="NC_003197.2"/>
</dbReference>
<dbReference type="SMR" id="P66932"/>
<dbReference type="STRING" id="99287.STM0447"/>
<dbReference type="PaxDb" id="99287-STM0447"/>
<dbReference type="GeneID" id="1251967"/>
<dbReference type="KEGG" id="stm:STM0447"/>
<dbReference type="PATRIC" id="fig|99287.12.peg.479"/>
<dbReference type="HOGENOM" id="CLU_033058_2_0_6"/>
<dbReference type="OMA" id="KGIKTQF"/>
<dbReference type="PhylomeDB" id="P66932"/>
<dbReference type="BioCyc" id="SENT99287:STM0447-MONOMER"/>
<dbReference type="Proteomes" id="UP000001014">
    <property type="component" value="Chromosome"/>
</dbReference>
<dbReference type="GO" id="GO:0005737">
    <property type="term" value="C:cytoplasm"/>
    <property type="evidence" value="ECO:0007669"/>
    <property type="project" value="UniProtKB-SubCell"/>
</dbReference>
<dbReference type="GO" id="GO:0003755">
    <property type="term" value="F:peptidyl-prolyl cis-trans isomerase activity"/>
    <property type="evidence" value="ECO:0000318"/>
    <property type="project" value="GO_Central"/>
</dbReference>
<dbReference type="GO" id="GO:0044183">
    <property type="term" value="F:protein folding chaperone"/>
    <property type="evidence" value="ECO:0000318"/>
    <property type="project" value="GO_Central"/>
</dbReference>
<dbReference type="GO" id="GO:0043022">
    <property type="term" value="F:ribosome binding"/>
    <property type="evidence" value="ECO:0000318"/>
    <property type="project" value="GO_Central"/>
</dbReference>
<dbReference type="GO" id="GO:0051083">
    <property type="term" value="P:'de novo' cotranslational protein folding"/>
    <property type="evidence" value="ECO:0000318"/>
    <property type="project" value="GO_Central"/>
</dbReference>
<dbReference type="GO" id="GO:0051301">
    <property type="term" value="P:cell division"/>
    <property type="evidence" value="ECO:0007669"/>
    <property type="project" value="UniProtKB-KW"/>
</dbReference>
<dbReference type="GO" id="GO:0061077">
    <property type="term" value="P:chaperone-mediated protein folding"/>
    <property type="evidence" value="ECO:0000318"/>
    <property type="project" value="GO_Central"/>
</dbReference>
<dbReference type="GO" id="GO:0015031">
    <property type="term" value="P:protein transport"/>
    <property type="evidence" value="ECO:0007669"/>
    <property type="project" value="UniProtKB-UniRule"/>
</dbReference>
<dbReference type="GO" id="GO:0043335">
    <property type="term" value="P:protein unfolding"/>
    <property type="evidence" value="ECO:0000318"/>
    <property type="project" value="GO_Central"/>
</dbReference>
<dbReference type="FunFam" id="1.10.3120.10:FF:000001">
    <property type="entry name" value="Trigger factor"/>
    <property type="match status" value="1"/>
</dbReference>
<dbReference type="FunFam" id="3.10.50.40:FF:000001">
    <property type="entry name" value="Trigger factor"/>
    <property type="match status" value="1"/>
</dbReference>
<dbReference type="FunFam" id="3.30.70.1050:FF:000001">
    <property type="entry name" value="Trigger factor"/>
    <property type="match status" value="1"/>
</dbReference>
<dbReference type="Gene3D" id="3.10.50.40">
    <property type="match status" value="1"/>
</dbReference>
<dbReference type="Gene3D" id="3.30.70.1050">
    <property type="entry name" value="Trigger factor ribosome-binding domain"/>
    <property type="match status" value="1"/>
</dbReference>
<dbReference type="Gene3D" id="1.10.3120.10">
    <property type="entry name" value="Trigger factor, C-terminal domain"/>
    <property type="match status" value="1"/>
</dbReference>
<dbReference type="HAMAP" id="MF_00303">
    <property type="entry name" value="Trigger_factor_Tig"/>
    <property type="match status" value="1"/>
</dbReference>
<dbReference type="InterPro" id="IPR046357">
    <property type="entry name" value="PPIase_dom_sf"/>
</dbReference>
<dbReference type="InterPro" id="IPR001179">
    <property type="entry name" value="PPIase_FKBP_dom"/>
</dbReference>
<dbReference type="InterPro" id="IPR005215">
    <property type="entry name" value="Trig_fac"/>
</dbReference>
<dbReference type="InterPro" id="IPR008880">
    <property type="entry name" value="Trigger_fac_C"/>
</dbReference>
<dbReference type="InterPro" id="IPR037041">
    <property type="entry name" value="Trigger_fac_C_sf"/>
</dbReference>
<dbReference type="InterPro" id="IPR008881">
    <property type="entry name" value="Trigger_fac_ribosome-bd_bac"/>
</dbReference>
<dbReference type="InterPro" id="IPR036611">
    <property type="entry name" value="Trigger_fac_ribosome-bd_sf"/>
</dbReference>
<dbReference type="InterPro" id="IPR027304">
    <property type="entry name" value="Trigger_fact/SurA_dom_sf"/>
</dbReference>
<dbReference type="NCBIfam" id="TIGR00115">
    <property type="entry name" value="tig"/>
    <property type="match status" value="1"/>
</dbReference>
<dbReference type="PANTHER" id="PTHR30560">
    <property type="entry name" value="TRIGGER FACTOR CHAPERONE AND PEPTIDYL-PROLYL CIS/TRANS ISOMERASE"/>
    <property type="match status" value="1"/>
</dbReference>
<dbReference type="PANTHER" id="PTHR30560:SF3">
    <property type="entry name" value="TRIGGER FACTOR-LIKE PROTEIN TIG, CHLOROPLASTIC"/>
    <property type="match status" value="1"/>
</dbReference>
<dbReference type="Pfam" id="PF00254">
    <property type="entry name" value="FKBP_C"/>
    <property type="match status" value="1"/>
</dbReference>
<dbReference type="Pfam" id="PF05698">
    <property type="entry name" value="Trigger_C"/>
    <property type="match status" value="1"/>
</dbReference>
<dbReference type="Pfam" id="PF05697">
    <property type="entry name" value="Trigger_N"/>
    <property type="match status" value="1"/>
</dbReference>
<dbReference type="PIRSF" id="PIRSF003095">
    <property type="entry name" value="Trigger_factor"/>
    <property type="match status" value="1"/>
</dbReference>
<dbReference type="SUPFAM" id="SSF54534">
    <property type="entry name" value="FKBP-like"/>
    <property type="match status" value="1"/>
</dbReference>
<dbReference type="SUPFAM" id="SSF109998">
    <property type="entry name" value="Triger factor/SurA peptide-binding domain-like"/>
    <property type="match status" value="1"/>
</dbReference>
<dbReference type="SUPFAM" id="SSF102735">
    <property type="entry name" value="Trigger factor ribosome-binding domain"/>
    <property type="match status" value="1"/>
</dbReference>
<dbReference type="PROSITE" id="PS50059">
    <property type="entry name" value="FKBP_PPIASE"/>
    <property type="match status" value="1"/>
</dbReference>
<proteinExistence type="inferred from homology"/>